<name>S6A12_MOUSE</name>
<evidence type="ECO:0000250" key="1"/>
<evidence type="ECO:0000250" key="2">
    <source>
        <dbReference type="UniProtKB" id="P27799"/>
    </source>
</evidence>
<evidence type="ECO:0000250" key="3">
    <source>
        <dbReference type="UniProtKB" id="P48065"/>
    </source>
</evidence>
<evidence type="ECO:0000250" key="4">
    <source>
        <dbReference type="UniProtKB" id="Q7K4Y6"/>
    </source>
</evidence>
<evidence type="ECO:0000255" key="5"/>
<evidence type="ECO:0000256" key="6">
    <source>
        <dbReference type="SAM" id="MobiDB-lite"/>
    </source>
</evidence>
<evidence type="ECO:0000269" key="7">
    <source>
    </source>
</evidence>
<evidence type="ECO:0000303" key="8">
    <source>
    </source>
</evidence>
<evidence type="ECO:0000305" key="9"/>
<evidence type="ECO:0000305" key="10">
    <source>
    </source>
</evidence>
<keyword id="KW-1003">Cell membrane</keyword>
<keyword id="KW-1015">Disulfide bond</keyword>
<keyword id="KW-0325">Glycoprotein</keyword>
<keyword id="KW-0472">Membrane</keyword>
<keyword id="KW-0532">Neurotransmitter transport</keyword>
<keyword id="KW-1185">Reference proteome</keyword>
<keyword id="KW-0769">Symport</keyword>
<keyword id="KW-0812">Transmembrane</keyword>
<keyword id="KW-1133">Transmembrane helix</keyword>
<keyword id="KW-0813">Transport</keyword>
<gene>
    <name type="primary">Slc6a12</name>
    <name evidence="8" type="synonym">Bgt1</name>
    <name type="synonym">Gabt2</name>
    <name type="synonym">Gat-2</name>
    <name type="synonym">Gat2</name>
</gene>
<feature type="chain" id="PRO_0000214789" description="Sodium- and chloride-dependent betaine transporter">
    <location>
        <begin position="1"/>
        <end position="614"/>
    </location>
</feature>
<feature type="topological domain" description="Cytoplasmic" evidence="5">
    <location>
        <begin position="1"/>
        <end position="44"/>
    </location>
</feature>
<feature type="transmembrane region" description="Helical; Name=1" evidence="5">
    <location>
        <begin position="45"/>
        <end position="65"/>
    </location>
</feature>
<feature type="transmembrane region" description="Helical; Name=2" evidence="5">
    <location>
        <begin position="73"/>
        <end position="92"/>
    </location>
</feature>
<feature type="transmembrane region" description="Helical; Name=3" evidence="5">
    <location>
        <begin position="117"/>
        <end position="137"/>
    </location>
</feature>
<feature type="topological domain" description="Extracellular" evidence="5">
    <location>
        <begin position="138"/>
        <end position="210"/>
    </location>
</feature>
<feature type="transmembrane region" description="Helical; Name=4" evidence="5">
    <location>
        <begin position="211"/>
        <end position="229"/>
    </location>
</feature>
<feature type="transmembrane region" description="Helical; Name=5" evidence="5">
    <location>
        <begin position="238"/>
        <end position="255"/>
    </location>
</feature>
<feature type="transmembrane region" description="Helical; Name=6" evidence="5">
    <location>
        <begin position="291"/>
        <end position="308"/>
    </location>
</feature>
<feature type="transmembrane region" description="Helical; Name=7" evidence="5">
    <location>
        <begin position="320"/>
        <end position="341"/>
    </location>
</feature>
<feature type="transmembrane region" description="Helical; Name=8" evidence="5">
    <location>
        <begin position="374"/>
        <end position="393"/>
    </location>
</feature>
<feature type="transmembrane region" description="Helical; Name=9" evidence="5">
    <location>
        <begin position="423"/>
        <end position="441"/>
    </location>
</feature>
<feature type="transmembrane region" description="Helical; Name=10" evidence="5">
    <location>
        <begin position="458"/>
        <end position="478"/>
    </location>
</feature>
<feature type="transmembrane region" description="Helical; Name=11" evidence="5">
    <location>
        <begin position="499"/>
        <end position="518"/>
    </location>
</feature>
<feature type="transmembrane region" description="Helical; Name=12" evidence="5">
    <location>
        <begin position="538"/>
        <end position="556"/>
    </location>
</feature>
<feature type="topological domain" description="Cytoplasmic" evidence="5">
    <location>
        <begin position="557"/>
        <end position="614"/>
    </location>
</feature>
<feature type="region of interest" description="Disordered" evidence="6">
    <location>
        <begin position="574"/>
        <end position="602"/>
    </location>
</feature>
<feature type="compositionally biased region" description="Polar residues" evidence="6">
    <location>
        <begin position="589"/>
        <end position="601"/>
    </location>
</feature>
<feature type="glycosylation site" description="N-linked (GlcNAc...) asparagine" evidence="5">
    <location>
        <position position="171"/>
    </location>
</feature>
<feature type="glycosylation site" description="N-linked (GlcNAc...) asparagine" evidence="5">
    <location>
        <position position="183"/>
    </location>
</feature>
<feature type="disulfide bond" evidence="4">
    <location>
        <begin position="157"/>
        <end position="166"/>
    </location>
</feature>
<proteinExistence type="evidence at protein level"/>
<dbReference type="EMBL" id="M97632">
    <property type="status" value="NOT_ANNOTATED_CDS"/>
    <property type="molecule type" value="mRNA"/>
</dbReference>
<dbReference type="CCDS" id="CCDS90118.1"/>
<dbReference type="PIR" id="A43390">
    <property type="entry name" value="A43390"/>
</dbReference>
<dbReference type="SMR" id="P31651"/>
<dbReference type="FunCoup" id="P31651">
    <property type="interactions" value="6"/>
</dbReference>
<dbReference type="STRING" id="10090.ENSMUSP00000032200"/>
<dbReference type="BindingDB" id="P31651"/>
<dbReference type="ChEMBL" id="CHEMBL4228"/>
<dbReference type="DrugCentral" id="P31651"/>
<dbReference type="GuidetoPHARMACOLOGY" id="932"/>
<dbReference type="GlyCosmos" id="P31651">
    <property type="glycosylation" value="2 sites, No reported glycans"/>
</dbReference>
<dbReference type="GlyGen" id="P31651">
    <property type="glycosylation" value="2 sites"/>
</dbReference>
<dbReference type="iPTMnet" id="P31651"/>
<dbReference type="PhosphoSitePlus" id="P31651"/>
<dbReference type="SwissPalm" id="P31651"/>
<dbReference type="jPOST" id="P31651"/>
<dbReference type="PaxDb" id="10090-ENSMUSP00000032200"/>
<dbReference type="ProteomicsDB" id="253389"/>
<dbReference type="AGR" id="MGI:95628"/>
<dbReference type="MGI" id="MGI:95628">
    <property type="gene designation" value="Slc6a12"/>
</dbReference>
<dbReference type="eggNOG" id="KOG3660">
    <property type="taxonomic scope" value="Eukaryota"/>
</dbReference>
<dbReference type="InParanoid" id="P31651"/>
<dbReference type="Reactome" id="R-MMU-352230">
    <property type="pathway name" value="Amino acid transport across the plasma membrane"/>
</dbReference>
<dbReference type="Reactome" id="R-MMU-442660">
    <property type="pathway name" value="Na+/Cl- dependent neurotransmitter transporters"/>
</dbReference>
<dbReference type="Reactome" id="R-MMU-71288">
    <property type="pathway name" value="Creatine metabolism"/>
</dbReference>
<dbReference type="Reactome" id="R-MMU-888593">
    <property type="pathway name" value="Reuptake of GABA"/>
</dbReference>
<dbReference type="PRO" id="PR:P31651"/>
<dbReference type="Proteomes" id="UP000000589">
    <property type="component" value="Unplaced"/>
</dbReference>
<dbReference type="RNAct" id="P31651">
    <property type="molecule type" value="protein"/>
</dbReference>
<dbReference type="GO" id="GO:0016323">
    <property type="term" value="C:basolateral plasma membrane"/>
    <property type="evidence" value="ECO:0000314"/>
    <property type="project" value="UniProtKB"/>
</dbReference>
<dbReference type="GO" id="GO:0005886">
    <property type="term" value="C:plasma membrane"/>
    <property type="evidence" value="ECO:0000314"/>
    <property type="project" value="UniProtKB"/>
</dbReference>
<dbReference type="GO" id="GO:0005332">
    <property type="term" value="F:gamma-aminobutyric acid:sodium:chloride symporter activity"/>
    <property type="evidence" value="ECO:0000314"/>
    <property type="project" value="UniProtKB"/>
</dbReference>
<dbReference type="GO" id="GO:0015812">
    <property type="term" value="P:gamma-aminobutyric acid transport"/>
    <property type="evidence" value="ECO:0000314"/>
    <property type="project" value="UniProtKB"/>
</dbReference>
<dbReference type="GO" id="GO:0031460">
    <property type="term" value="P:glycine betaine transport"/>
    <property type="evidence" value="ECO:0000314"/>
    <property type="project" value="UniProtKB"/>
</dbReference>
<dbReference type="GO" id="GO:0006836">
    <property type="term" value="P:neurotransmitter transport"/>
    <property type="evidence" value="ECO:0007669"/>
    <property type="project" value="UniProtKB-KW"/>
</dbReference>
<dbReference type="InterPro" id="IPR000175">
    <property type="entry name" value="Na/ntran_symport"/>
</dbReference>
<dbReference type="InterPro" id="IPR002983">
    <property type="entry name" value="Na/ntran_symport_betaine"/>
</dbReference>
<dbReference type="InterPro" id="IPR037272">
    <property type="entry name" value="SNS_sf"/>
</dbReference>
<dbReference type="PANTHER" id="PTHR11616:SF118">
    <property type="entry name" value="SODIUM- AND CHLORIDE-DEPENDENT BETAINE TRANSPORTER"/>
    <property type="match status" value="1"/>
</dbReference>
<dbReference type="PANTHER" id="PTHR11616">
    <property type="entry name" value="SODIUM/CHLORIDE DEPENDENT TRANSPORTER"/>
    <property type="match status" value="1"/>
</dbReference>
<dbReference type="Pfam" id="PF00209">
    <property type="entry name" value="SNF"/>
    <property type="match status" value="1"/>
</dbReference>
<dbReference type="PRINTS" id="PR01198">
    <property type="entry name" value="BETTRANSPORT"/>
</dbReference>
<dbReference type="PRINTS" id="PR00176">
    <property type="entry name" value="NANEUSMPORT"/>
</dbReference>
<dbReference type="SUPFAM" id="SSF161070">
    <property type="entry name" value="SNF-like"/>
    <property type="match status" value="1"/>
</dbReference>
<dbReference type="PROSITE" id="PS00610">
    <property type="entry name" value="NA_NEUROTRAN_SYMP_1"/>
    <property type="match status" value="1"/>
</dbReference>
<dbReference type="PROSITE" id="PS00754">
    <property type="entry name" value="NA_NEUROTRAN_SYMP_2"/>
    <property type="match status" value="1"/>
</dbReference>
<dbReference type="PROSITE" id="PS50267">
    <property type="entry name" value="NA_NEUROTRAN_SYMP_3"/>
    <property type="match status" value="1"/>
</dbReference>
<organism>
    <name type="scientific">Mus musculus</name>
    <name type="common">Mouse</name>
    <dbReference type="NCBI Taxonomy" id="10090"/>
    <lineage>
        <taxon>Eukaryota</taxon>
        <taxon>Metazoa</taxon>
        <taxon>Chordata</taxon>
        <taxon>Craniata</taxon>
        <taxon>Vertebrata</taxon>
        <taxon>Euteleostomi</taxon>
        <taxon>Mammalia</taxon>
        <taxon>Eutheria</taxon>
        <taxon>Euarchontoglires</taxon>
        <taxon>Glires</taxon>
        <taxon>Rodentia</taxon>
        <taxon>Myomorpha</taxon>
        <taxon>Muroidea</taxon>
        <taxon>Muridae</taxon>
        <taxon>Murinae</taxon>
        <taxon>Mus</taxon>
        <taxon>Mus</taxon>
    </lineage>
</organism>
<reference key="1">
    <citation type="journal article" date="1992" name="J. Biol. Chem.">
        <title>Expression of a mouse brain cDNA encoding novel gamma-aminobutyric acid transporter.</title>
        <authorList>
            <person name="Lopez-Corcuera B."/>
            <person name="Liu Q.-R."/>
            <person name="Mandiyan S."/>
            <person name="Nelson H."/>
            <person name="Nelson N."/>
        </authorList>
    </citation>
    <scope>NUCLEOTIDE SEQUENCE [MRNA]</scope>
    <source>
        <tissue>Brain</tissue>
    </source>
</reference>
<reference key="2">
    <citation type="journal article" date="2012" name="Am. J. Physiol.">
        <title>The betaine-GABA transporter (BGT1, slc6a12) is predominantly expressed in the liver and at lower levels in the kidneys and at the brain surface.</title>
        <authorList>
            <person name="Zhou Y."/>
            <person name="Holmseth S."/>
            <person name="Hua R."/>
            <person name="Lehre A.C."/>
            <person name="Olofsson A.M."/>
            <person name="Poblete-Naredo I."/>
            <person name="Kempson S.A."/>
            <person name="Danbolt N.C."/>
        </authorList>
    </citation>
    <scope>SUBCELLULAR LOCATION</scope>
    <scope>TISSUE SPECIFICITY</scope>
    <scope>FUNCTION</scope>
</reference>
<comment type="function">
    <text evidence="3 10">Transporter that mediates cellular uptake of betaine and GABA in a sodium- and chloride-dependent process (By similarity). May have a role in regulation of GABAergic transmission in the brain through the reuptake of GABA into presynaptic terminals, as well as in osmotic regulation (Probable). Probably also involved in renal and hepatic osmotic regulation (PubMed:22071246).</text>
</comment>
<comment type="catalytic activity">
    <reaction evidence="3">
        <text>4-aminobutanoate(out) + chloride(out) + 3 Na(+)(out) = 4-aminobutanoate(in) + chloride(in) + 3 Na(+)(in)</text>
        <dbReference type="Rhea" id="RHEA:70731"/>
        <dbReference type="ChEBI" id="CHEBI:17996"/>
        <dbReference type="ChEBI" id="CHEBI:29101"/>
        <dbReference type="ChEBI" id="CHEBI:59888"/>
    </reaction>
    <physiologicalReaction direction="left-to-right" evidence="3">
        <dbReference type="Rhea" id="RHEA:70732"/>
    </physiologicalReaction>
</comment>
<comment type="catalytic activity">
    <reaction evidence="2">
        <text>glycine betaine(out) + 2 chloride(out) + 3 Na(+)(out) = glycine betaine(in) + 2 chloride(in) + 3 Na(+)(in)</text>
        <dbReference type="Rhea" id="RHEA:71175"/>
        <dbReference type="ChEBI" id="CHEBI:17750"/>
        <dbReference type="ChEBI" id="CHEBI:17996"/>
        <dbReference type="ChEBI" id="CHEBI:29101"/>
    </reaction>
    <physiologicalReaction direction="left-to-right" evidence="2">
        <dbReference type="Rhea" id="RHEA:71176"/>
    </physiologicalReaction>
</comment>
<comment type="subunit">
    <text evidence="1">Interacts with LIN7C.</text>
</comment>
<comment type="subcellular location">
    <subcellularLocation>
        <location evidence="7">Basolateral cell membrane</location>
        <topology evidence="5">Multi-pass membrane protein</topology>
    </subcellularLocation>
    <subcellularLocation>
        <location evidence="7">Cell membrane</location>
        <topology evidence="5">Multi-pass membrane protein</topology>
    </subcellularLocation>
    <text evidence="7">In kidney, locates in basolateral membranes of renal medulla. In liver, locates in hepatocytes cell membrane.</text>
</comment>
<comment type="tissue specificity">
    <text evidence="7">Predominantly expressed in the liver (sinusoidal hepatocyte plasma membranes), also present in the renal medulla, where it localizes to the basolateral membranes of collecting ducts (particularly at the papilla tip) and the thick ascending limbs of Henle (at protein level). Some expression is detected in the leptomeninges, but no expression is detected in brain parenchyma, brain blood vessels, ependymal cells, the renal cortex and the intestine.</text>
</comment>
<comment type="similarity">
    <text evidence="9">Belongs to the sodium:neurotransmitter symporter (SNF) (TC 2.A.22) family. SLC6A12 subfamily.</text>
</comment>
<accession>P31651</accession>
<protein>
    <recommendedName>
        <fullName>Sodium- and chloride-dependent betaine transporter</fullName>
    </recommendedName>
    <alternativeName>
        <fullName evidence="8">BGT-1</fullName>
    </alternativeName>
    <alternativeName>
        <fullName>Na(+)/Cl(-) betaine/GABA transporter</fullName>
    </alternativeName>
    <alternativeName>
        <fullName>Sodium- and chloride-dependent GABA transporter 2</fullName>
        <shortName>GAT-2</shortName>
    </alternativeName>
    <alternativeName>
        <fullName>Solute carrier family 6 member 12</fullName>
    </alternativeName>
</protein>
<sequence>MDRKVAVHEDGYPVVSWVPEEGEMMDQKGKDQVKDRGQWTNKMEFVLSVAGEIIGLGNVWRFPYLCYKNGGGAFFIPYFIFFFSCGIPVFFLEVALGQYSSQGSVTAWRKICPLLQGIGMASVVIESYLNIYYIIILAWALFYLFSSFTWELPWTTCTNSWNTEHCVDFLNHSSARGVSSSENFTSPVMEFWERRVLGITSGIHDLGSLRWELALCLLLAWIICYFCIWKGVKSTGKVVYFTATFPYLMLIILLIRGVTLPGAYQGIVFYLKPDLLRLKDPQVWMDAGTQIFFSFAICQGCLTALGSYNKYHNNCYRDSIALCFLNSATSFVAGFVVFSILGFMSQEQGIPISEVAESGPGLAFIAFPKAVTMMPLSQLWSCLFFIMLLFLGLDSQFVCMECLVTASMDMFPQQLRKSGRRDVLILAISVLCYLMGLLLVTEGGMYIFQLFDYYASSGICLLFLSLFEVICIGWVYGADRFYDNVEDMIGYRPWPLVKISWLFLTPGLCLATFFFSLSKYTPLKYNNVYMYPSWGYSIGWLLAFSSMACVPLFIIITFLKTQGSFKKRLRRLITPDPSLPQPGRRPPQDGSSAQNCSSSPAKQELIAWEKETHL</sequence>